<name>YKQ7_CAEEL</name>
<dbReference type="EC" id="2.4.-.-"/>
<dbReference type="EMBL" id="FO080280">
    <property type="protein sequence ID" value="CCD62567.1"/>
    <property type="molecule type" value="Genomic_DNA"/>
</dbReference>
<dbReference type="RefSeq" id="NP_498891.2">
    <property type="nucleotide sequence ID" value="NM_066490.4"/>
</dbReference>
<dbReference type="FunCoup" id="P34302">
    <property type="interactions" value="12"/>
</dbReference>
<dbReference type="CAZy" id="GT11">
    <property type="family name" value="Glycosyltransferase Family 11"/>
</dbReference>
<dbReference type="PaxDb" id="6239-C06E1.7"/>
<dbReference type="EnsemblMetazoa" id="C06E1.7.1">
    <property type="protein sequence ID" value="C06E1.7.1"/>
    <property type="gene ID" value="WBGene00015522"/>
</dbReference>
<dbReference type="GeneID" id="182316"/>
<dbReference type="KEGG" id="cel:CELE_C06E1.7"/>
<dbReference type="UCSC" id="C06E1.7">
    <property type="organism name" value="c. elegans"/>
</dbReference>
<dbReference type="AGR" id="WB:WBGene00015522"/>
<dbReference type="CTD" id="182316"/>
<dbReference type="WormBase" id="C06E1.7">
    <property type="protein sequence ID" value="CE30483"/>
    <property type="gene ID" value="WBGene00015522"/>
</dbReference>
<dbReference type="eggNOG" id="ENOG502TG0A">
    <property type="taxonomic scope" value="Eukaryota"/>
</dbReference>
<dbReference type="GeneTree" id="ENSGT00530000064380"/>
<dbReference type="HOGENOM" id="CLU_038305_0_0_1"/>
<dbReference type="InParanoid" id="P34302"/>
<dbReference type="OMA" id="GHFYQSW"/>
<dbReference type="OrthoDB" id="5854901at2759"/>
<dbReference type="PhylomeDB" id="P34302"/>
<dbReference type="PRO" id="PR:P34302"/>
<dbReference type="Proteomes" id="UP000001940">
    <property type="component" value="Chromosome III"/>
</dbReference>
<dbReference type="Bgee" id="WBGene00015522">
    <property type="expression patterns" value="Expressed in larva and 1 other cell type or tissue"/>
</dbReference>
<dbReference type="GO" id="GO:0016020">
    <property type="term" value="C:membrane"/>
    <property type="evidence" value="ECO:0007669"/>
    <property type="project" value="InterPro"/>
</dbReference>
<dbReference type="GO" id="GO:0008107">
    <property type="term" value="F:galactoside 2-alpha-L-fucosyltransferase activity"/>
    <property type="evidence" value="ECO:0007669"/>
    <property type="project" value="InterPro"/>
</dbReference>
<dbReference type="GO" id="GO:0005975">
    <property type="term" value="P:carbohydrate metabolic process"/>
    <property type="evidence" value="ECO:0007669"/>
    <property type="project" value="InterPro"/>
</dbReference>
<dbReference type="GO" id="GO:0043413">
    <property type="term" value="P:macromolecule glycosylation"/>
    <property type="evidence" value="ECO:0000318"/>
    <property type="project" value="GO_Central"/>
</dbReference>
<dbReference type="CDD" id="cd11301">
    <property type="entry name" value="Fut1_Fut2_like"/>
    <property type="match status" value="1"/>
</dbReference>
<dbReference type="InterPro" id="IPR052501">
    <property type="entry name" value="Alpha-1-2_FucT"/>
</dbReference>
<dbReference type="InterPro" id="IPR002516">
    <property type="entry name" value="Glyco_trans_11"/>
</dbReference>
<dbReference type="PANTHER" id="PTHR22898:SF3">
    <property type="entry name" value="ALPHA-1,2-FUCOSYLTRANSFERASE-RELATED"/>
    <property type="match status" value="1"/>
</dbReference>
<dbReference type="PANTHER" id="PTHR22898">
    <property type="entry name" value="UNCHARACTERIZED GLYCOSOL TRANSFERASE-RELATED"/>
    <property type="match status" value="1"/>
</dbReference>
<dbReference type="Pfam" id="PF01531">
    <property type="entry name" value="Glyco_transf_11"/>
    <property type="match status" value="1"/>
</dbReference>
<proteinExistence type="inferred from homology"/>
<comment type="similarity">
    <text evidence="1">Belongs to the glycosyltransferase 11 family.</text>
</comment>
<keyword id="KW-0328">Glycosyltransferase</keyword>
<keyword id="KW-1185">Reference proteome</keyword>
<keyword id="KW-0808">Transferase</keyword>
<reference key="1">
    <citation type="journal article" date="1994" name="Nature">
        <title>2.2 Mb of contiguous nucleotide sequence from chromosome III of C. elegans.</title>
        <authorList>
            <person name="Wilson R."/>
            <person name="Ainscough R."/>
            <person name="Anderson K."/>
            <person name="Baynes C."/>
            <person name="Berks M."/>
            <person name="Bonfield J."/>
            <person name="Burton J."/>
            <person name="Connell M."/>
            <person name="Copsey T."/>
            <person name="Cooper J."/>
            <person name="Coulson A."/>
            <person name="Craxton M."/>
            <person name="Dear S."/>
            <person name="Du Z."/>
            <person name="Durbin R."/>
            <person name="Favello A."/>
            <person name="Fraser A."/>
            <person name="Fulton L."/>
            <person name="Gardner A."/>
            <person name="Green P."/>
            <person name="Hawkins T."/>
            <person name="Hillier L."/>
            <person name="Jier M."/>
            <person name="Johnston L."/>
            <person name="Jones M."/>
            <person name="Kershaw J."/>
            <person name="Kirsten J."/>
            <person name="Laisster N."/>
            <person name="Latreille P."/>
            <person name="Lightning J."/>
            <person name="Lloyd C."/>
            <person name="Mortimore B."/>
            <person name="O'Callaghan M."/>
            <person name="Parsons J."/>
            <person name="Percy C."/>
            <person name="Rifken L."/>
            <person name="Roopra A."/>
            <person name="Saunders D."/>
            <person name="Shownkeen R."/>
            <person name="Sims M."/>
            <person name="Smaldon N."/>
            <person name="Smith A."/>
            <person name="Smith M."/>
            <person name="Sonnhammer E."/>
            <person name="Staden R."/>
            <person name="Sulston J."/>
            <person name="Thierry-Mieg J."/>
            <person name="Thomas K."/>
            <person name="Vaudin M."/>
            <person name="Vaughan K."/>
            <person name="Waterston R."/>
            <person name="Watson A."/>
            <person name="Weinstock L."/>
            <person name="Wilkinson-Sproat J."/>
            <person name="Wohldman P."/>
        </authorList>
    </citation>
    <scope>NUCLEOTIDE SEQUENCE [LARGE SCALE GENOMIC DNA]</scope>
    <source>
        <strain>Bristol N2</strain>
    </source>
</reference>
<reference key="2">
    <citation type="journal article" date="1998" name="Science">
        <title>Genome sequence of the nematode C. elegans: a platform for investigating biology.</title>
        <authorList>
            <consortium name="The C. elegans sequencing consortium"/>
        </authorList>
    </citation>
    <scope>NUCLEOTIDE SEQUENCE [LARGE SCALE GENOMIC DNA]</scope>
    <source>
        <strain>Bristol N2</strain>
    </source>
</reference>
<accession>P34302</accession>
<organism>
    <name type="scientific">Caenorhabditis elegans</name>
    <dbReference type="NCBI Taxonomy" id="6239"/>
    <lineage>
        <taxon>Eukaryota</taxon>
        <taxon>Metazoa</taxon>
        <taxon>Ecdysozoa</taxon>
        <taxon>Nematoda</taxon>
        <taxon>Chromadorea</taxon>
        <taxon>Rhabditida</taxon>
        <taxon>Rhabditina</taxon>
        <taxon>Rhabditomorpha</taxon>
        <taxon>Rhabditoidea</taxon>
        <taxon>Rhabditidae</taxon>
        <taxon>Peloderinae</taxon>
        <taxon>Caenorhabditis</taxon>
    </lineage>
</organism>
<evidence type="ECO:0000305" key="1"/>
<feature type="chain" id="PRO_0000149116" description="Putative glycosyltransferase C06E1.7">
    <location>
        <begin position="1"/>
        <end position="365"/>
    </location>
</feature>
<sequence>MSNYNKPIQLLCVLVVVLFFINNQFVQRTTWSRGLRSPPLDSRIFQEKSEIERSTLPPIPKGFLSSKLASTARLANHIFELVSVYGMAKSLNRKPAIFVEDSKYNLLITGVRKVLPGLLDEFQIFEYPVHNKATKVPLSEKCCIFDNPDKFNNISSEYLHLTGHFYQSWKYFDKYKEKVQSFVKPAIDFSPLPNSDSSNFISRICIHIRRTDFVDGQHHSSNVSFIKPALEFIKEREQKDVNKKMLTVIMGDDPDFEAKMFEGTVRAKKEAKIEETTKYFVSENTPQDDLAYSHYSCDATLITAPSSTFGWWLGYLSKGQAVYYQDIRSTNDVNYKKGVLDPDDFFVPSWTSIMLDENKKVVVVT</sequence>
<gene>
    <name type="ORF">C06E1.7</name>
</gene>
<protein>
    <recommendedName>
        <fullName>Putative glycosyltransferase C06E1.7</fullName>
        <ecNumber>2.4.-.-</ecNumber>
    </recommendedName>
</protein>